<name>DNAJ_GLOC7</name>
<feature type="chain" id="PRO_1000137676" description="Chaperone protein DnaJ">
    <location>
        <begin position="1"/>
        <end position="375"/>
    </location>
</feature>
<feature type="domain" description="J" evidence="1">
    <location>
        <begin position="4"/>
        <end position="68"/>
    </location>
</feature>
<feature type="repeat" description="CXXCXGXG motif">
    <location>
        <begin position="147"/>
        <end position="154"/>
    </location>
</feature>
<feature type="repeat" description="CXXCXGXG motif">
    <location>
        <begin position="164"/>
        <end position="171"/>
    </location>
</feature>
<feature type="repeat" description="CXXCXGXG motif">
    <location>
        <begin position="190"/>
        <end position="197"/>
    </location>
</feature>
<feature type="repeat" description="CXXCXGXG motif">
    <location>
        <begin position="204"/>
        <end position="211"/>
    </location>
</feature>
<feature type="zinc finger region" description="CR-type" evidence="1">
    <location>
        <begin position="134"/>
        <end position="216"/>
    </location>
</feature>
<feature type="binding site" evidence="1">
    <location>
        <position position="147"/>
    </location>
    <ligand>
        <name>Zn(2+)</name>
        <dbReference type="ChEBI" id="CHEBI:29105"/>
        <label>1</label>
    </ligand>
</feature>
<feature type="binding site" evidence="1">
    <location>
        <position position="150"/>
    </location>
    <ligand>
        <name>Zn(2+)</name>
        <dbReference type="ChEBI" id="CHEBI:29105"/>
        <label>1</label>
    </ligand>
</feature>
<feature type="binding site" evidence="1">
    <location>
        <position position="164"/>
    </location>
    <ligand>
        <name>Zn(2+)</name>
        <dbReference type="ChEBI" id="CHEBI:29105"/>
        <label>2</label>
    </ligand>
</feature>
<feature type="binding site" evidence="1">
    <location>
        <position position="167"/>
    </location>
    <ligand>
        <name>Zn(2+)</name>
        <dbReference type="ChEBI" id="CHEBI:29105"/>
        <label>2</label>
    </ligand>
</feature>
<feature type="binding site" evidence="1">
    <location>
        <position position="190"/>
    </location>
    <ligand>
        <name>Zn(2+)</name>
        <dbReference type="ChEBI" id="CHEBI:29105"/>
        <label>2</label>
    </ligand>
</feature>
<feature type="binding site" evidence="1">
    <location>
        <position position="193"/>
    </location>
    <ligand>
        <name>Zn(2+)</name>
        <dbReference type="ChEBI" id="CHEBI:29105"/>
        <label>2</label>
    </ligand>
</feature>
<feature type="binding site" evidence="1">
    <location>
        <position position="204"/>
    </location>
    <ligand>
        <name>Zn(2+)</name>
        <dbReference type="ChEBI" id="CHEBI:29105"/>
        <label>1</label>
    </ligand>
</feature>
<feature type="binding site" evidence="1">
    <location>
        <position position="207"/>
    </location>
    <ligand>
        <name>Zn(2+)</name>
        <dbReference type="ChEBI" id="CHEBI:29105"/>
        <label>1</label>
    </ligand>
</feature>
<proteinExistence type="inferred from homology"/>
<organism>
    <name type="scientific">Gloeothece citriformis (strain PCC 7424)</name>
    <name type="common">Cyanothece sp. (strain PCC 7424)</name>
    <dbReference type="NCBI Taxonomy" id="65393"/>
    <lineage>
        <taxon>Bacteria</taxon>
        <taxon>Bacillati</taxon>
        <taxon>Cyanobacteriota</taxon>
        <taxon>Cyanophyceae</taxon>
        <taxon>Oscillatoriophycideae</taxon>
        <taxon>Chroococcales</taxon>
        <taxon>Aphanothecaceae</taxon>
        <taxon>Gloeothece</taxon>
        <taxon>Gloeothece citriformis</taxon>
    </lineage>
</organism>
<accession>B7KEJ8</accession>
<keyword id="KW-0143">Chaperone</keyword>
<keyword id="KW-0963">Cytoplasm</keyword>
<keyword id="KW-0235">DNA replication</keyword>
<keyword id="KW-0479">Metal-binding</keyword>
<keyword id="KW-1185">Reference proteome</keyword>
<keyword id="KW-0677">Repeat</keyword>
<keyword id="KW-0346">Stress response</keyword>
<keyword id="KW-0862">Zinc</keyword>
<keyword id="KW-0863">Zinc-finger</keyword>
<reference key="1">
    <citation type="journal article" date="2011" name="MBio">
        <title>Novel metabolic attributes of the genus Cyanothece, comprising a group of unicellular nitrogen-fixing Cyanobacteria.</title>
        <authorList>
            <person name="Bandyopadhyay A."/>
            <person name="Elvitigala T."/>
            <person name="Welsh E."/>
            <person name="Stockel J."/>
            <person name="Liberton M."/>
            <person name="Min H."/>
            <person name="Sherman L.A."/>
            <person name="Pakrasi H.B."/>
        </authorList>
    </citation>
    <scope>NUCLEOTIDE SEQUENCE [LARGE SCALE GENOMIC DNA]</scope>
    <source>
        <strain>PCC 7424</strain>
    </source>
</reference>
<gene>
    <name evidence="1" type="primary">dnaJ</name>
    <name type="ordered locus">PCC7424_0560</name>
</gene>
<dbReference type="EMBL" id="CP001291">
    <property type="protein sequence ID" value="ACK69023.1"/>
    <property type="molecule type" value="Genomic_DNA"/>
</dbReference>
<dbReference type="RefSeq" id="WP_012597970.1">
    <property type="nucleotide sequence ID" value="NC_011729.1"/>
</dbReference>
<dbReference type="SMR" id="B7KEJ8"/>
<dbReference type="STRING" id="65393.PCC7424_0560"/>
<dbReference type="KEGG" id="cyc:PCC7424_0560"/>
<dbReference type="eggNOG" id="COG0484">
    <property type="taxonomic scope" value="Bacteria"/>
</dbReference>
<dbReference type="HOGENOM" id="CLU_017633_0_1_3"/>
<dbReference type="OrthoDB" id="9779889at2"/>
<dbReference type="Proteomes" id="UP000002384">
    <property type="component" value="Chromosome"/>
</dbReference>
<dbReference type="GO" id="GO:0005737">
    <property type="term" value="C:cytoplasm"/>
    <property type="evidence" value="ECO:0007669"/>
    <property type="project" value="UniProtKB-SubCell"/>
</dbReference>
<dbReference type="GO" id="GO:0005524">
    <property type="term" value="F:ATP binding"/>
    <property type="evidence" value="ECO:0007669"/>
    <property type="project" value="InterPro"/>
</dbReference>
<dbReference type="GO" id="GO:0031072">
    <property type="term" value="F:heat shock protein binding"/>
    <property type="evidence" value="ECO:0007669"/>
    <property type="project" value="InterPro"/>
</dbReference>
<dbReference type="GO" id="GO:0051082">
    <property type="term" value="F:unfolded protein binding"/>
    <property type="evidence" value="ECO:0007669"/>
    <property type="project" value="UniProtKB-UniRule"/>
</dbReference>
<dbReference type="GO" id="GO:0008270">
    <property type="term" value="F:zinc ion binding"/>
    <property type="evidence" value="ECO:0007669"/>
    <property type="project" value="UniProtKB-UniRule"/>
</dbReference>
<dbReference type="GO" id="GO:0051085">
    <property type="term" value="P:chaperone cofactor-dependent protein refolding"/>
    <property type="evidence" value="ECO:0007669"/>
    <property type="project" value="TreeGrafter"/>
</dbReference>
<dbReference type="GO" id="GO:0006260">
    <property type="term" value="P:DNA replication"/>
    <property type="evidence" value="ECO:0007669"/>
    <property type="project" value="UniProtKB-KW"/>
</dbReference>
<dbReference type="GO" id="GO:0042026">
    <property type="term" value="P:protein refolding"/>
    <property type="evidence" value="ECO:0007669"/>
    <property type="project" value="TreeGrafter"/>
</dbReference>
<dbReference type="GO" id="GO:0009408">
    <property type="term" value="P:response to heat"/>
    <property type="evidence" value="ECO:0007669"/>
    <property type="project" value="InterPro"/>
</dbReference>
<dbReference type="CDD" id="cd06257">
    <property type="entry name" value="DnaJ"/>
    <property type="match status" value="1"/>
</dbReference>
<dbReference type="CDD" id="cd10747">
    <property type="entry name" value="DnaJ_C"/>
    <property type="match status" value="1"/>
</dbReference>
<dbReference type="CDD" id="cd10719">
    <property type="entry name" value="DnaJ_zf"/>
    <property type="match status" value="1"/>
</dbReference>
<dbReference type="FunFam" id="2.60.260.20:FF:000005">
    <property type="entry name" value="Chaperone protein dnaJ 1, mitochondrial"/>
    <property type="match status" value="1"/>
</dbReference>
<dbReference type="FunFam" id="2.10.230.10:FF:000002">
    <property type="entry name" value="Molecular chaperone DnaJ"/>
    <property type="match status" value="1"/>
</dbReference>
<dbReference type="FunFam" id="2.60.260.20:FF:000009">
    <property type="entry name" value="Putative Mitochondrial DnaJ chaperone"/>
    <property type="match status" value="1"/>
</dbReference>
<dbReference type="Gene3D" id="1.10.287.110">
    <property type="entry name" value="DnaJ domain"/>
    <property type="match status" value="1"/>
</dbReference>
<dbReference type="Gene3D" id="2.10.230.10">
    <property type="entry name" value="Heat shock protein DnaJ, cysteine-rich domain"/>
    <property type="match status" value="1"/>
</dbReference>
<dbReference type="Gene3D" id="2.60.260.20">
    <property type="entry name" value="Urease metallochaperone UreE, N-terminal domain"/>
    <property type="match status" value="2"/>
</dbReference>
<dbReference type="HAMAP" id="MF_01152">
    <property type="entry name" value="DnaJ"/>
    <property type="match status" value="1"/>
</dbReference>
<dbReference type="InterPro" id="IPR012724">
    <property type="entry name" value="DnaJ"/>
</dbReference>
<dbReference type="InterPro" id="IPR002939">
    <property type="entry name" value="DnaJ_C"/>
</dbReference>
<dbReference type="InterPro" id="IPR001623">
    <property type="entry name" value="DnaJ_domain"/>
</dbReference>
<dbReference type="InterPro" id="IPR008971">
    <property type="entry name" value="HSP40/DnaJ_pept-bd"/>
</dbReference>
<dbReference type="InterPro" id="IPR001305">
    <property type="entry name" value="HSP_DnaJ_Cys-rich_dom"/>
</dbReference>
<dbReference type="InterPro" id="IPR036410">
    <property type="entry name" value="HSP_DnaJ_Cys-rich_dom_sf"/>
</dbReference>
<dbReference type="InterPro" id="IPR036869">
    <property type="entry name" value="J_dom_sf"/>
</dbReference>
<dbReference type="NCBIfam" id="TIGR02349">
    <property type="entry name" value="DnaJ_bact"/>
    <property type="match status" value="1"/>
</dbReference>
<dbReference type="NCBIfam" id="NF008035">
    <property type="entry name" value="PRK10767.1"/>
    <property type="match status" value="1"/>
</dbReference>
<dbReference type="NCBIfam" id="NF010886">
    <property type="entry name" value="PRK14293.1"/>
    <property type="match status" value="1"/>
</dbReference>
<dbReference type="PANTHER" id="PTHR43096:SF10">
    <property type="entry name" value="CHAPERONE PROTEIN DNAJ A6, CHLOROPLASTIC"/>
    <property type="match status" value="1"/>
</dbReference>
<dbReference type="PANTHER" id="PTHR43096">
    <property type="entry name" value="DNAJ HOMOLOG 1, MITOCHONDRIAL-RELATED"/>
    <property type="match status" value="1"/>
</dbReference>
<dbReference type="Pfam" id="PF00226">
    <property type="entry name" value="DnaJ"/>
    <property type="match status" value="1"/>
</dbReference>
<dbReference type="Pfam" id="PF01556">
    <property type="entry name" value="DnaJ_C"/>
    <property type="match status" value="1"/>
</dbReference>
<dbReference type="Pfam" id="PF00684">
    <property type="entry name" value="DnaJ_CXXCXGXG"/>
    <property type="match status" value="1"/>
</dbReference>
<dbReference type="PRINTS" id="PR00625">
    <property type="entry name" value="JDOMAIN"/>
</dbReference>
<dbReference type="SMART" id="SM00271">
    <property type="entry name" value="DnaJ"/>
    <property type="match status" value="1"/>
</dbReference>
<dbReference type="SUPFAM" id="SSF46565">
    <property type="entry name" value="Chaperone J-domain"/>
    <property type="match status" value="1"/>
</dbReference>
<dbReference type="SUPFAM" id="SSF57938">
    <property type="entry name" value="DnaJ/Hsp40 cysteine-rich domain"/>
    <property type="match status" value="1"/>
</dbReference>
<dbReference type="SUPFAM" id="SSF49493">
    <property type="entry name" value="HSP40/DnaJ peptide-binding domain"/>
    <property type="match status" value="2"/>
</dbReference>
<dbReference type="PROSITE" id="PS50076">
    <property type="entry name" value="DNAJ_2"/>
    <property type="match status" value="1"/>
</dbReference>
<dbReference type="PROSITE" id="PS51188">
    <property type="entry name" value="ZF_CR"/>
    <property type="match status" value="1"/>
</dbReference>
<sequence>MPGDYYEILGVSRDANKDEIKRAYRRLARKYHPDVNKEIGAEERFKEINRAYEILSEPETRARYDRFGEAGVSSGAGSGFEYGDMGGIADIFETIFSGFGGMGTGTSSRRRTGPVRGDDLRLDFKLNFREAVFGGEKEIRIRHLETCQVCEGSGAKPGTGSRTCSTCSGSGQVRRATRTPFGTFAQVSVCPTCNGSGEVIEEKCEACGGSGRKQETKKLKITIPAGVDNGTRLRVSREGDAGQRGGPPGDLYVYLSVETDEEFQREGIDIKSEISISYLQAILGCRLSVNTVDGPEEITIEPGTQPNTVLTLPNRGVPKLGNPVARGDHLITINVSIPTRVNPEERELLEKLAKIRGESHGKGGIEGFLGGLFHK</sequence>
<comment type="function">
    <text evidence="1">Participates actively in the response to hyperosmotic and heat shock by preventing the aggregation of stress-denatured proteins and by disaggregating proteins, also in an autonomous, DnaK-independent fashion. Unfolded proteins bind initially to DnaJ; upon interaction with the DnaJ-bound protein, DnaK hydrolyzes its bound ATP, resulting in the formation of a stable complex. GrpE releases ADP from DnaK; ATP binding to DnaK triggers the release of the substrate protein, thus completing the reaction cycle. Several rounds of ATP-dependent interactions between DnaJ, DnaK and GrpE are required for fully efficient folding. Also involved, together with DnaK and GrpE, in the DNA replication of plasmids through activation of initiation proteins.</text>
</comment>
<comment type="cofactor">
    <cofactor evidence="1">
        <name>Zn(2+)</name>
        <dbReference type="ChEBI" id="CHEBI:29105"/>
    </cofactor>
    <text evidence="1">Binds 2 Zn(2+) ions per monomer.</text>
</comment>
<comment type="subunit">
    <text evidence="1">Homodimer.</text>
</comment>
<comment type="subcellular location">
    <subcellularLocation>
        <location evidence="1">Cytoplasm</location>
    </subcellularLocation>
</comment>
<comment type="domain">
    <text evidence="1">The J domain is necessary and sufficient to stimulate DnaK ATPase activity. Zinc center 1 plays an important role in the autonomous, DnaK-independent chaperone activity of DnaJ. Zinc center 2 is essential for interaction with DnaK and for DnaJ activity.</text>
</comment>
<comment type="similarity">
    <text evidence="1">Belongs to the DnaJ family.</text>
</comment>
<evidence type="ECO:0000255" key="1">
    <source>
        <dbReference type="HAMAP-Rule" id="MF_01152"/>
    </source>
</evidence>
<protein>
    <recommendedName>
        <fullName evidence="1">Chaperone protein DnaJ</fullName>
    </recommendedName>
</protein>